<dbReference type="EMBL" id="BX248583">
    <property type="protein sequence ID" value="CAD83693.1"/>
    <property type="molecule type" value="Genomic_DNA"/>
</dbReference>
<dbReference type="SMR" id="Q7VQF9"/>
<dbReference type="STRING" id="203907.Bfl174"/>
<dbReference type="KEGG" id="bfl:Bfl174"/>
<dbReference type="eggNOG" id="COG0806">
    <property type="taxonomic scope" value="Bacteria"/>
</dbReference>
<dbReference type="HOGENOM" id="CLU_077636_1_0_6"/>
<dbReference type="OrthoDB" id="9783509at2"/>
<dbReference type="Proteomes" id="UP000002192">
    <property type="component" value="Chromosome"/>
</dbReference>
<dbReference type="GO" id="GO:0005737">
    <property type="term" value="C:cytoplasm"/>
    <property type="evidence" value="ECO:0007669"/>
    <property type="project" value="UniProtKB-SubCell"/>
</dbReference>
<dbReference type="GO" id="GO:0005840">
    <property type="term" value="C:ribosome"/>
    <property type="evidence" value="ECO:0007669"/>
    <property type="project" value="InterPro"/>
</dbReference>
<dbReference type="GO" id="GO:0043022">
    <property type="term" value="F:ribosome binding"/>
    <property type="evidence" value="ECO:0007669"/>
    <property type="project" value="InterPro"/>
</dbReference>
<dbReference type="GO" id="GO:0042274">
    <property type="term" value="P:ribosomal small subunit biogenesis"/>
    <property type="evidence" value="ECO:0007669"/>
    <property type="project" value="UniProtKB-UniRule"/>
</dbReference>
<dbReference type="GO" id="GO:0006364">
    <property type="term" value="P:rRNA processing"/>
    <property type="evidence" value="ECO:0007669"/>
    <property type="project" value="UniProtKB-UniRule"/>
</dbReference>
<dbReference type="Gene3D" id="2.30.30.240">
    <property type="entry name" value="PRC-barrel domain"/>
    <property type="match status" value="1"/>
</dbReference>
<dbReference type="Gene3D" id="2.40.30.60">
    <property type="entry name" value="RimM"/>
    <property type="match status" value="1"/>
</dbReference>
<dbReference type="HAMAP" id="MF_00014">
    <property type="entry name" value="Ribosome_mat_RimM"/>
    <property type="match status" value="1"/>
</dbReference>
<dbReference type="InterPro" id="IPR027275">
    <property type="entry name" value="PRC-brl_dom"/>
</dbReference>
<dbReference type="InterPro" id="IPR011033">
    <property type="entry name" value="PRC_barrel-like_sf"/>
</dbReference>
<dbReference type="InterPro" id="IPR011961">
    <property type="entry name" value="RimM"/>
</dbReference>
<dbReference type="InterPro" id="IPR002676">
    <property type="entry name" value="RimM_N"/>
</dbReference>
<dbReference type="InterPro" id="IPR036976">
    <property type="entry name" value="RimM_N_sf"/>
</dbReference>
<dbReference type="InterPro" id="IPR009000">
    <property type="entry name" value="Transl_B-barrel_sf"/>
</dbReference>
<dbReference type="NCBIfam" id="TIGR02273">
    <property type="entry name" value="16S_RimM"/>
    <property type="match status" value="1"/>
</dbReference>
<dbReference type="PANTHER" id="PTHR33692">
    <property type="entry name" value="RIBOSOME MATURATION FACTOR RIMM"/>
    <property type="match status" value="1"/>
</dbReference>
<dbReference type="PANTHER" id="PTHR33692:SF1">
    <property type="entry name" value="RIBOSOME MATURATION FACTOR RIMM"/>
    <property type="match status" value="1"/>
</dbReference>
<dbReference type="Pfam" id="PF05239">
    <property type="entry name" value="PRC"/>
    <property type="match status" value="1"/>
</dbReference>
<dbReference type="Pfam" id="PF01782">
    <property type="entry name" value="RimM"/>
    <property type="match status" value="1"/>
</dbReference>
<dbReference type="SUPFAM" id="SSF50346">
    <property type="entry name" value="PRC-barrel domain"/>
    <property type="match status" value="1"/>
</dbReference>
<dbReference type="SUPFAM" id="SSF50447">
    <property type="entry name" value="Translation proteins"/>
    <property type="match status" value="1"/>
</dbReference>
<evidence type="ECO:0000255" key="1">
    <source>
        <dbReference type="HAMAP-Rule" id="MF_00014"/>
    </source>
</evidence>
<reference key="1">
    <citation type="journal article" date="2003" name="Proc. Natl. Acad. Sci. U.S.A.">
        <title>The genome sequence of Blochmannia floridanus: comparative analysis of reduced genomes.</title>
        <authorList>
            <person name="Gil R."/>
            <person name="Silva F.J."/>
            <person name="Zientz E."/>
            <person name="Delmotte F."/>
            <person name="Gonzalez-Candelas F."/>
            <person name="Latorre A."/>
            <person name="Rausell C."/>
            <person name="Kamerbeek J."/>
            <person name="Gadau J."/>
            <person name="Hoelldobler B."/>
            <person name="van Ham R.C.H.J."/>
            <person name="Gross R."/>
            <person name="Moya A."/>
        </authorList>
    </citation>
    <scope>NUCLEOTIDE SEQUENCE [LARGE SCALE GENOMIC DNA]</scope>
</reference>
<organism>
    <name type="scientific">Blochmanniella floridana</name>
    <dbReference type="NCBI Taxonomy" id="203907"/>
    <lineage>
        <taxon>Bacteria</taxon>
        <taxon>Pseudomonadati</taxon>
        <taxon>Pseudomonadota</taxon>
        <taxon>Gammaproteobacteria</taxon>
        <taxon>Enterobacterales</taxon>
        <taxon>Enterobacteriaceae</taxon>
        <taxon>ant endosymbionts</taxon>
        <taxon>Candidatus Blochmanniella</taxon>
    </lineage>
</organism>
<name>RIMM_BLOFL</name>
<proteinExistence type="inferred from homology"/>
<sequence length="185" mass="21922">MKVIVINSTPINPIVIGRIKGAYGILGWVKILSFTEKIEDIFVYNPWFIFFRSKWKVIKLEYWRLMNNKNYIVKFFNVSDRNHAMALSQHNLVVESIQFPKLYNKDEYYWKDIIGCKIMTINGKCLGRVISIIDTKAHDILVVRSEEYGFTKYVDCLIPFILKKIIKDVDLIKNIVVVDWEIYKF</sequence>
<protein>
    <recommendedName>
        <fullName evidence="1">Ribosome maturation factor RimM</fullName>
    </recommendedName>
</protein>
<comment type="function">
    <text evidence="1">An accessory protein needed during the final step in the assembly of 30S ribosomal subunit, possibly for assembly of the head region. Essential for efficient processing of 16S rRNA. May be needed both before and after RbfA during the maturation of 16S rRNA. It has affinity for free ribosomal 30S subunits but not for 70S ribosomes.</text>
</comment>
<comment type="subunit">
    <text evidence="1">Binds ribosomal protein uS19.</text>
</comment>
<comment type="subcellular location">
    <subcellularLocation>
        <location evidence="1">Cytoplasm</location>
    </subcellularLocation>
</comment>
<comment type="domain">
    <text evidence="1">The PRC barrel domain binds ribosomal protein uS19.</text>
</comment>
<comment type="similarity">
    <text evidence="1">Belongs to the RimM family.</text>
</comment>
<keyword id="KW-0143">Chaperone</keyword>
<keyword id="KW-0963">Cytoplasm</keyword>
<keyword id="KW-1185">Reference proteome</keyword>
<keyword id="KW-0690">Ribosome biogenesis</keyword>
<keyword id="KW-0698">rRNA processing</keyword>
<feature type="chain" id="PRO_0000163273" description="Ribosome maturation factor RimM">
    <location>
        <begin position="1"/>
        <end position="185"/>
    </location>
</feature>
<feature type="domain" description="PRC barrel" evidence="1">
    <location>
        <begin position="105"/>
        <end position="184"/>
    </location>
</feature>
<gene>
    <name evidence="1" type="primary">rimM</name>
    <name type="ordered locus">Bfl174</name>
</gene>
<accession>Q7VQF9</accession>